<dbReference type="EMBL" id="CR382131">
    <property type="protein sequence ID" value="CAG79585.1"/>
    <property type="molecule type" value="Genomic_DNA"/>
</dbReference>
<dbReference type="RefSeq" id="XP_503992.1">
    <property type="nucleotide sequence ID" value="XM_503992.1"/>
</dbReference>
<dbReference type="FunCoup" id="Q6C5S0">
    <property type="interactions" value="44"/>
</dbReference>
<dbReference type="STRING" id="284591.Q6C5S0"/>
<dbReference type="EnsemblFungi" id="CAG79585">
    <property type="protein sequence ID" value="CAG79585"/>
    <property type="gene ID" value="YALI0_E15686g"/>
</dbReference>
<dbReference type="KEGG" id="yli:2911559"/>
<dbReference type="VEuPathDB" id="FungiDB:YALI0_E15686g"/>
<dbReference type="HOGENOM" id="CLU_147520_0_0_1"/>
<dbReference type="InParanoid" id="Q6C5S0"/>
<dbReference type="OMA" id="YRWARVG"/>
<dbReference type="OrthoDB" id="113943at4891"/>
<dbReference type="Proteomes" id="UP000001300">
    <property type="component" value="Chromosome E"/>
</dbReference>
<dbReference type="GO" id="GO:0005743">
    <property type="term" value="C:mitochondrial inner membrane"/>
    <property type="evidence" value="ECO:0007669"/>
    <property type="project" value="UniProtKB-SubCell"/>
</dbReference>
<dbReference type="GO" id="GO:0031966">
    <property type="term" value="C:mitochondrial membrane"/>
    <property type="evidence" value="ECO:0000318"/>
    <property type="project" value="GO_Central"/>
</dbReference>
<dbReference type="GO" id="GO:0034551">
    <property type="term" value="P:mitochondrial respiratory chain complex III assembly"/>
    <property type="evidence" value="ECO:0000318"/>
    <property type="project" value="GO_Central"/>
</dbReference>
<dbReference type="InterPro" id="IPR012420">
    <property type="entry name" value="Cbp4"/>
</dbReference>
<dbReference type="PANTHER" id="PTHR28202">
    <property type="entry name" value="ASSEMBLY FACTOR CBP4"/>
    <property type="match status" value="1"/>
</dbReference>
<dbReference type="PANTHER" id="PTHR28202:SF1">
    <property type="entry name" value="ASSEMBLY FACTOR CBP4"/>
    <property type="match status" value="1"/>
</dbReference>
<dbReference type="Pfam" id="PF07960">
    <property type="entry name" value="CBP4"/>
    <property type="match status" value="1"/>
</dbReference>
<protein>
    <recommendedName>
        <fullName>Assembly factor CBP4</fullName>
    </recommendedName>
    <alternativeName>
        <fullName>Cytochrome b mRNA-processing protein 4</fullName>
    </alternativeName>
</protein>
<keyword id="KW-0143">Chaperone</keyword>
<keyword id="KW-0175">Coiled coil</keyword>
<keyword id="KW-0472">Membrane</keyword>
<keyword id="KW-0496">Mitochondrion</keyword>
<keyword id="KW-0999">Mitochondrion inner membrane</keyword>
<keyword id="KW-1185">Reference proteome</keyword>
<keyword id="KW-0812">Transmembrane</keyword>
<keyword id="KW-1133">Transmembrane helix</keyword>
<accession>Q6C5S0</accession>
<organism>
    <name type="scientific">Yarrowia lipolytica (strain CLIB 122 / E 150)</name>
    <name type="common">Yeast</name>
    <name type="synonym">Candida lipolytica</name>
    <dbReference type="NCBI Taxonomy" id="284591"/>
    <lineage>
        <taxon>Eukaryota</taxon>
        <taxon>Fungi</taxon>
        <taxon>Dikarya</taxon>
        <taxon>Ascomycota</taxon>
        <taxon>Saccharomycotina</taxon>
        <taxon>Dipodascomycetes</taxon>
        <taxon>Dipodascales</taxon>
        <taxon>Dipodascales incertae sedis</taxon>
        <taxon>Yarrowia</taxon>
    </lineage>
</organism>
<sequence length="146" mass="17325">MRLENWPIVEMFRSRPGVPNWPKFGLFAVGVIGSAYLGYRYATPSEEDIVRRMNPELRERYMLERDARQEYFNEFVKEAIAQSKTNEPIWKVGPMASKPIDFNVAVREKMKEIEARNDQDRNERIKNELAAIAKKEEEEKNKKGWW</sequence>
<comment type="function">
    <text evidence="1">Essential for the assembly of ubiquinol-cytochrome c reductase. It has a direct effect on the correct occurrence of the Rieske protein, core 4, core 5 and apocytochrome b (By similarity).</text>
</comment>
<comment type="subcellular location">
    <subcellularLocation>
        <location evidence="1">Mitochondrion inner membrane</location>
        <topology evidence="1">Single-pass membrane protein</topology>
    </subcellularLocation>
</comment>
<comment type="similarity">
    <text evidence="3">Belongs to the CBP4 family.</text>
</comment>
<evidence type="ECO:0000250" key="1"/>
<evidence type="ECO:0000255" key="2"/>
<evidence type="ECO:0000305" key="3"/>
<gene>
    <name type="primary">CBP4</name>
    <name type="ordered locus">YALI0E15686g</name>
</gene>
<name>CBP4_YARLI</name>
<proteinExistence type="inferred from homology"/>
<reference key="1">
    <citation type="journal article" date="2004" name="Nature">
        <title>Genome evolution in yeasts.</title>
        <authorList>
            <person name="Dujon B."/>
            <person name="Sherman D."/>
            <person name="Fischer G."/>
            <person name="Durrens P."/>
            <person name="Casaregola S."/>
            <person name="Lafontaine I."/>
            <person name="de Montigny J."/>
            <person name="Marck C."/>
            <person name="Neuveglise C."/>
            <person name="Talla E."/>
            <person name="Goffard N."/>
            <person name="Frangeul L."/>
            <person name="Aigle M."/>
            <person name="Anthouard V."/>
            <person name="Babour A."/>
            <person name="Barbe V."/>
            <person name="Barnay S."/>
            <person name="Blanchin S."/>
            <person name="Beckerich J.-M."/>
            <person name="Beyne E."/>
            <person name="Bleykasten C."/>
            <person name="Boisrame A."/>
            <person name="Boyer J."/>
            <person name="Cattolico L."/>
            <person name="Confanioleri F."/>
            <person name="de Daruvar A."/>
            <person name="Despons L."/>
            <person name="Fabre E."/>
            <person name="Fairhead C."/>
            <person name="Ferry-Dumazet H."/>
            <person name="Groppi A."/>
            <person name="Hantraye F."/>
            <person name="Hennequin C."/>
            <person name="Jauniaux N."/>
            <person name="Joyet P."/>
            <person name="Kachouri R."/>
            <person name="Kerrest A."/>
            <person name="Koszul R."/>
            <person name="Lemaire M."/>
            <person name="Lesur I."/>
            <person name="Ma L."/>
            <person name="Muller H."/>
            <person name="Nicaud J.-M."/>
            <person name="Nikolski M."/>
            <person name="Oztas S."/>
            <person name="Ozier-Kalogeropoulos O."/>
            <person name="Pellenz S."/>
            <person name="Potier S."/>
            <person name="Richard G.-F."/>
            <person name="Straub M.-L."/>
            <person name="Suleau A."/>
            <person name="Swennen D."/>
            <person name="Tekaia F."/>
            <person name="Wesolowski-Louvel M."/>
            <person name="Westhof E."/>
            <person name="Wirth B."/>
            <person name="Zeniou-Meyer M."/>
            <person name="Zivanovic Y."/>
            <person name="Bolotin-Fukuhara M."/>
            <person name="Thierry A."/>
            <person name="Bouchier C."/>
            <person name="Caudron B."/>
            <person name="Scarpelli C."/>
            <person name="Gaillardin C."/>
            <person name="Weissenbach J."/>
            <person name="Wincker P."/>
            <person name="Souciet J.-L."/>
        </authorList>
    </citation>
    <scope>NUCLEOTIDE SEQUENCE [LARGE SCALE GENOMIC DNA]</scope>
    <source>
        <strain>CLIB 122 / E 150</strain>
    </source>
</reference>
<feature type="chain" id="PRO_0000330140" description="Assembly factor CBP4">
    <location>
        <begin position="1"/>
        <end position="146"/>
    </location>
</feature>
<feature type="transmembrane region" description="Helical" evidence="2">
    <location>
        <begin position="21"/>
        <end position="43"/>
    </location>
</feature>
<feature type="coiled-coil region" evidence="2">
    <location>
        <begin position="103"/>
        <end position="143"/>
    </location>
</feature>